<name>HIS1_DESAP</name>
<accession>B1I190</accession>
<sequence length="289" mass="32270">MKLRLGLPKGSLQEKTFQLFKKAGYDLQVNSRSYYPAVNDPELEILLMRAQEIPRYVHEGVLDAGLSGLDWIMENEADVVEVADLIYSKRSQRPVRLVLAVANDSDIREVRDLQGKRIATELVNVTRRYLAAQGVEAIVEYSYGATEVKVPNLVDAIADLTETGSSLRANNLRILAVILESNTKLHANRAAWADPWKREKLLNLTVLLTGALRAENMVGLKMNVPGDRIDAVLGVLPAMKHPTVSQLFNSDWVAIETILNEQQVRDLIPILKRAGAQDIIEYPLNKVIP</sequence>
<gene>
    <name evidence="1" type="primary">hisG</name>
    <name type="ordered locus">Daud_0083</name>
</gene>
<proteinExistence type="inferred from homology"/>
<dbReference type="EC" id="2.4.2.17" evidence="1"/>
<dbReference type="EMBL" id="CP000860">
    <property type="protein sequence ID" value="ACA58651.1"/>
    <property type="molecule type" value="Genomic_DNA"/>
</dbReference>
<dbReference type="RefSeq" id="WP_012301245.1">
    <property type="nucleotide sequence ID" value="NC_010424.1"/>
</dbReference>
<dbReference type="SMR" id="B1I190"/>
<dbReference type="STRING" id="477974.Daud_0083"/>
<dbReference type="KEGG" id="dau:Daud_0083"/>
<dbReference type="eggNOG" id="COG0040">
    <property type="taxonomic scope" value="Bacteria"/>
</dbReference>
<dbReference type="HOGENOM" id="CLU_038115_1_1_9"/>
<dbReference type="OrthoDB" id="9801867at2"/>
<dbReference type="UniPathway" id="UPA00031">
    <property type="reaction ID" value="UER00006"/>
</dbReference>
<dbReference type="Proteomes" id="UP000008544">
    <property type="component" value="Chromosome"/>
</dbReference>
<dbReference type="GO" id="GO:0005737">
    <property type="term" value="C:cytoplasm"/>
    <property type="evidence" value="ECO:0007669"/>
    <property type="project" value="UniProtKB-SubCell"/>
</dbReference>
<dbReference type="GO" id="GO:0005524">
    <property type="term" value="F:ATP binding"/>
    <property type="evidence" value="ECO:0007669"/>
    <property type="project" value="UniProtKB-KW"/>
</dbReference>
<dbReference type="GO" id="GO:0003879">
    <property type="term" value="F:ATP phosphoribosyltransferase activity"/>
    <property type="evidence" value="ECO:0007669"/>
    <property type="project" value="UniProtKB-UniRule"/>
</dbReference>
<dbReference type="GO" id="GO:0000287">
    <property type="term" value="F:magnesium ion binding"/>
    <property type="evidence" value="ECO:0007669"/>
    <property type="project" value="UniProtKB-UniRule"/>
</dbReference>
<dbReference type="GO" id="GO:0000105">
    <property type="term" value="P:L-histidine biosynthetic process"/>
    <property type="evidence" value="ECO:0007669"/>
    <property type="project" value="UniProtKB-UniRule"/>
</dbReference>
<dbReference type="CDD" id="cd13593">
    <property type="entry name" value="PBP2_HisGL3"/>
    <property type="match status" value="1"/>
</dbReference>
<dbReference type="FunFam" id="3.30.70.120:FF:000002">
    <property type="entry name" value="ATP phosphoribosyltransferase"/>
    <property type="match status" value="1"/>
</dbReference>
<dbReference type="Gene3D" id="3.30.70.120">
    <property type="match status" value="1"/>
</dbReference>
<dbReference type="Gene3D" id="3.40.190.10">
    <property type="entry name" value="Periplasmic binding protein-like II"/>
    <property type="match status" value="2"/>
</dbReference>
<dbReference type="HAMAP" id="MF_00079">
    <property type="entry name" value="HisG_Long"/>
    <property type="match status" value="1"/>
</dbReference>
<dbReference type="InterPro" id="IPR020621">
    <property type="entry name" value="ATP-PRT_HisG_long"/>
</dbReference>
<dbReference type="InterPro" id="IPR013820">
    <property type="entry name" value="ATP_PRibTrfase_cat"/>
</dbReference>
<dbReference type="InterPro" id="IPR001348">
    <property type="entry name" value="ATP_PRibTrfase_HisG"/>
</dbReference>
<dbReference type="InterPro" id="IPR013115">
    <property type="entry name" value="HisG_C"/>
</dbReference>
<dbReference type="InterPro" id="IPR011322">
    <property type="entry name" value="N-reg_PII-like_a/b"/>
</dbReference>
<dbReference type="InterPro" id="IPR015867">
    <property type="entry name" value="N-reg_PII/ATP_PRibTrfase_C"/>
</dbReference>
<dbReference type="NCBIfam" id="TIGR00070">
    <property type="entry name" value="hisG"/>
    <property type="match status" value="1"/>
</dbReference>
<dbReference type="NCBIfam" id="TIGR03455">
    <property type="entry name" value="HisG_C-term"/>
    <property type="match status" value="1"/>
</dbReference>
<dbReference type="PANTHER" id="PTHR21403:SF10">
    <property type="entry name" value="ATP PHOSPHORIBOSYLTRANSFERASE"/>
    <property type="match status" value="1"/>
</dbReference>
<dbReference type="PANTHER" id="PTHR21403">
    <property type="entry name" value="ATP PHOSPHORIBOSYLTRANSFERASE ATP-PRTASE"/>
    <property type="match status" value="1"/>
</dbReference>
<dbReference type="Pfam" id="PF01634">
    <property type="entry name" value="HisG"/>
    <property type="match status" value="1"/>
</dbReference>
<dbReference type="Pfam" id="PF08029">
    <property type="entry name" value="HisG_C"/>
    <property type="match status" value="1"/>
</dbReference>
<dbReference type="SUPFAM" id="SSF54913">
    <property type="entry name" value="GlnB-like"/>
    <property type="match status" value="1"/>
</dbReference>
<dbReference type="SUPFAM" id="SSF53850">
    <property type="entry name" value="Periplasmic binding protein-like II"/>
    <property type="match status" value="1"/>
</dbReference>
<organism>
    <name type="scientific">Desulforudis audaxviator (strain MP104C)</name>
    <dbReference type="NCBI Taxonomy" id="477974"/>
    <lineage>
        <taxon>Bacteria</taxon>
        <taxon>Bacillati</taxon>
        <taxon>Bacillota</taxon>
        <taxon>Clostridia</taxon>
        <taxon>Thermoanaerobacterales</taxon>
        <taxon>Candidatus Desulforudaceae</taxon>
        <taxon>Candidatus Desulforudis</taxon>
    </lineage>
</organism>
<feature type="chain" id="PRO_1000117086" description="ATP phosphoribosyltransferase">
    <location>
        <begin position="1"/>
        <end position="289"/>
    </location>
</feature>
<keyword id="KW-0028">Amino-acid biosynthesis</keyword>
<keyword id="KW-0067">ATP-binding</keyword>
<keyword id="KW-0963">Cytoplasm</keyword>
<keyword id="KW-0328">Glycosyltransferase</keyword>
<keyword id="KW-0368">Histidine biosynthesis</keyword>
<keyword id="KW-0460">Magnesium</keyword>
<keyword id="KW-0479">Metal-binding</keyword>
<keyword id="KW-0547">Nucleotide-binding</keyword>
<keyword id="KW-1185">Reference proteome</keyword>
<keyword id="KW-0808">Transferase</keyword>
<reference key="1">
    <citation type="submission" date="2007-10" db="EMBL/GenBank/DDBJ databases">
        <title>Complete sequence of chromosome of Desulforudis audaxviator MP104C.</title>
        <authorList>
            <person name="Copeland A."/>
            <person name="Lucas S."/>
            <person name="Lapidus A."/>
            <person name="Barry K."/>
            <person name="Glavina del Rio T."/>
            <person name="Dalin E."/>
            <person name="Tice H."/>
            <person name="Bruce D."/>
            <person name="Pitluck S."/>
            <person name="Lowry S.R."/>
            <person name="Larimer F."/>
            <person name="Land M.L."/>
            <person name="Hauser L."/>
            <person name="Kyrpides N."/>
            <person name="Ivanova N.N."/>
            <person name="Richardson P."/>
        </authorList>
    </citation>
    <scope>NUCLEOTIDE SEQUENCE [LARGE SCALE GENOMIC DNA]</scope>
    <source>
        <strain>MP104C</strain>
    </source>
</reference>
<protein>
    <recommendedName>
        <fullName evidence="1">ATP phosphoribosyltransferase</fullName>
        <shortName evidence="1">ATP-PRT</shortName>
        <shortName evidence="1">ATP-PRTase</shortName>
        <ecNumber evidence="1">2.4.2.17</ecNumber>
    </recommendedName>
</protein>
<comment type="function">
    <text evidence="1">Catalyzes the condensation of ATP and 5-phosphoribose 1-diphosphate to form N'-(5'-phosphoribosyl)-ATP (PR-ATP). Has a crucial role in the pathway because the rate of histidine biosynthesis seems to be controlled primarily by regulation of HisG enzymatic activity.</text>
</comment>
<comment type="catalytic activity">
    <reaction evidence="1">
        <text>1-(5-phospho-beta-D-ribosyl)-ATP + diphosphate = 5-phospho-alpha-D-ribose 1-diphosphate + ATP</text>
        <dbReference type="Rhea" id="RHEA:18473"/>
        <dbReference type="ChEBI" id="CHEBI:30616"/>
        <dbReference type="ChEBI" id="CHEBI:33019"/>
        <dbReference type="ChEBI" id="CHEBI:58017"/>
        <dbReference type="ChEBI" id="CHEBI:73183"/>
        <dbReference type="EC" id="2.4.2.17"/>
    </reaction>
</comment>
<comment type="cofactor">
    <cofactor evidence="1">
        <name>Mg(2+)</name>
        <dbReference type="ChEBI" id="CHEBI:18420"/>
    </cofactor>
</comment>
<comment type="activity regulation">
    <text evidence="1">Feedback inhibited by histidine.</text>
</comment>
<comment type="pathway">
    <text evidence="1">Amino-acid biosynthesis; L-histidine biosynthesis; L-histidine from 5-phospho-alpha-D-ribose 1-diphosphate: step 1/9.</text>
</comment>
<comment type="subcellular location">
    <subcellularLocation>
        <location evidence="1">Cytoplasm</location>
    </subcellularLocation>
</comment>
<comment type="similarity">
    <text evidence="1">Belongs to the ATP phosphoribosyltransferase family. Long subfamily.</text>
</comment>
<evidence type="ECO:0000255" key="1">
    <source>
        <dbReference type="HAMAP-Rule" id="MF_00079"/>
    </source>
</evidence>